<name>MIBS_STRLS</name>
<geneLocation type="plasmid">
    <name>pKSL</name>
</geneLocation>
<dbReference type="EC" id="4.2.3.118"/>
<dbReference type="EMBL" id="AB547324">
    <property type="protein sequence ID" value="BAI77523.1"/>
    <property type="molecule type" value="Genomic_DNA"/>
</dbReference>
<dbReference type="SMR" id="D3KYU2"/>
<dbReference type="KEGG" id="ag:BAI77523"/>
<dbReference type="BRENDA" id="4.2.3.118">
    <property type="organism ID" value="12665"/>
</dbReference>
<dbReference type="GO" id="GO:0046872">
    <property type="term" value="F:metal ion binding"/>
    <property type="evidence" value="ECO:0007669"/>
    <property type="project" value="UniProtKB-KW"/>
</dbReference>
<dbReference type="GO" id="GO:0010333">
    <property type="term" value="F:terpene synthase activity"/>
    <property type="evidence" value="ECO:0000314"/>
    <property type="project" value="UniProtKB"/>
</dbReference>
<dbReference type="GO" id="GO:0042214">
    <property type="term" value="P:terpene metabolic process"/>
    <property type="evidence" value="ECO:0000314"/>
    <property type="project" value="UniProtKB"/>
</dbReference>
<dbReference type="FunFam" id="1.10.600.10:FF:000019">
    <property type="entry name" value="2-methylisoborneol synthase"/>
    <property type="match status" value="1"/>
</dbReference>
<dbReference type="Gene3D" id="1.10.600.10">
    <property type="entry name" value="Farnesyl Diphosphate Synthase"/>
    <property type="match status" value="1"/>
</dbReference>
<dbReference type="InterPro" id="IPR008949">
    <property type="entry name" value="Isoprenoid_synthase_dom_sf"/>
</dbReference>
<dbReference type="InterPro" id="IPR047945">
    <property type="entry name" value="MIB_synthase"/>
</dbReference>
<dbReference type="InterPro" id="IPR034686">
    <property type="entry name" value="Terpene_cyclase-like_2"/>
</dbReference>
<dbReference type="NCBIfam" id="NF041167">
    <property type="entry name" value="f2_encap_cargo2"/>
    <property type="match status" value="1"/>
</dbReference>
<dbReference type="PANTHER" id="PTHR35201:SF4">
    <property type="entry name" value="BETA-PINACENE SYNTHASE-RELATED"/>
    <property type="match status" value="1"/>
</dbReference>
<dbReference type="PANTHER" id="PTHR35201">
    <property type="entry name" value="TERPENE SYNTHASE"/>
    <property type="match status" value="1"/>
</dbReference>
<dbReference type="Pfam" id="PF19086">
    <property type="entry name" value="Terpene_syn_C_2"/>
    <property type="match status" value="1"/>
</dbReference>
<dbReference type="SFLD" id="SFLDS00005">
    <property type="entry name" value="Isoprenoid_Synthase_Type_I"/>
    <property type="match status" value="1"/>
</dbReference>
<dbReference type="SFLD" id="SFLDG01020">
    <property type="entry name" value="Terpene_Cyclase_Like_2"/>
    <property type="match status" value="1"/>
</dbReference>
<dbReference type="SUPFAM" id="SSF48576">
    <property type="entry name" value="Terpenoid synthases"/>
    <property type="match status" value="1"/>
</dbReference>
<reference key="1">
    <citation type="submission" date="2010-02" db="EMBL/GenBank/DDBJ databases">
        <authorList>
            <person name="Oikawa H."/>
            <person name="Tsuda M."/>
            <person name="Migita A."/>
        </authorList>
    </citation>
    <scope>NUCLEOTIDE SEQUENCE [GENOMIC DNA]</scope>
    <source>
        <strain>ATCC 31180 / DSM 41442 / NRRL 3382 / X-537</strain>
    </source>
</reference>
<reference key="2">
    <citation type="journal article" date="2008" name="Proc. Natl. Acad. Sci. U.S.A.">
        <title>Identification and functional analysis of genes controlling biosynthesis of 2-methylisoborneol.</title>
        <authorList>
            <person name="Komatsu M."/>
            <person name="Tsuda M."/>
            <person name="Omura S."/>
            <person name="Oikawa H."/>
            <person name="Ikeda H."/>
        </authorList>
    </citation>
    <scope>FUNCTION</scope>
    <scope>CATALYTIC ACTIVITY</scope>
    <scope>COFACTOR</scope>
    <scope>PATHWAY</scope>
    <source>
        <strain>ATCC 31180 / DSM 41442 / NRRL 3382 / X-537</strain>
    </source>
</reference>
<organism>
    <name type="scientific">Streptomyces lasalocidi</name>
    <name type="common">Streptomyces lasaliensis</name>
    <dbReference type="NCBI Taxonomy" id="324833"/>
    <lineage>
        <taxon>Bacteria</taxon>
        <taxon>Bacillati</taxon>
        <taxon>Actinomycetota</taxon>
        <taxon>Actinomycetes</taxon>
        <taxon>Kitasatosporales</taxon>
        <taxon>Streptomycetaceae</taxon>
        <taxon>Streptomyces</taxon>
    </lineage>
</organism>
<sequence length="481" mass="51628">MPDSGSLGPPTSLPEQPPAPPATAPDAPAATVTDRPVTSSVAHFLAGLHPPVTRPSSPPSPSMPPASSNPSSPPSSSMPPASWAPPSPLSPPAPSLPPTSPPATAPETSAATGSDSVVRRVPVGPTGLGTTALSLARRQAAVPPDAVPAPSGPSAEGPVVPGLYHHPIPEPDPVRVAEVSRRIKRWAEDEVRLYPEEWEGQFDGFSVGRYMVACHPDAPTVDHLMLATRLMVAENAVDDCYCEDHGGSPVGLGGRLLLAHTALDHLHTTAEYAPEWSESLGSDAPRRAYRSAMDHFVRAATPSQADRYRHDMARLHLGYLAEAAWAETGHVPEVCEYLAMRQFNNFRPCPTITDTVGGYELPADLHARPDMQRVIALAGNATTIVNDLYSYTKELDSPGRHLNLPVVIAEREHLSDRDAYLKAVEVHNELMHAFEAAAAELAADCPVPAVLRFLRGVAAWVDGNHDWHRTNTYRYSLPDFW</sequence>
<proteinExistence type="evidence at protein level"/>
<feature type="chain" id="PRO_0000403385" description="2-methylisoborneol synthase">
    <location>
        <begin position="1"/>
        <end position="481"/>
    </location>
</feature>
<feature type="region of interest" description="Disordered" evidence="2">
    <location>
        <begin position="1"/>
        <end position="125"/>
    </location>
</feature>
<feature type="region of interest" description="Disordered" evidence="2">
    <location>
        <begin position="139"/>
        <end position="160"/>
    </location>
</feature>
<feature type="compositionally biased region" description="Pro residues" evidence="2">
    <location>
        <begin position="11"/>
        <end position="23"/>
    </location>
</feature>
<feature type="compositionally biased region" description="Low complexity" evidence="2">
    <location>
        <begin position="24"/>
        <end position="33"/>
    </location>
</feature>
<feature type="compositionally biased region" description="Pro residues" evidence="2">
    <location>
        <begin position="52"/>
        <end position="64"/>
    </location>
</feature>
<feature type="compositionally biased region" description="Pro residues" evidence="2">
    <location>
        <begin position="71"/>
        <end position="104"/>
    </location>
</feature>
<feature type="compositionally biased region" description="Low complexity" evidence="2">
    <location>
        <begin position="105"/>
        <end position="114"/>
    </location>
</feature>
<feature type="binding site" evidence="1">
    <location>
        <position position="238"/>
    </location>
    <ligand>
        <name>Mg(2+)</name>
        <dbReference type="ChEBI" id="CHEBI:18420"/>
    </ligand>
</feature>
<feature type="binding site" evidence="1">
    <location>
        <position position="239"/>
    </location>
    <ligand>
        <name>Mg(2+)</name>
        <dbReference type="ChEBI" id="CHEBI:18420"/>
    </ligand>
</feature>
<feature type="binding site" evidence="1">
    <location>
        <position position="243"/>
    </location>
    <ligand>
        <name>Mg(2+)</name>
        <dbReference type="ChEBI" id="CHEBI:18420"/>
    </ligand>
</feature>
<feature type="binding site" evidence="1">
    <location>
        <position position="386"/>
    </location>
    <ligand>
        <name>Mg(2+)</name>
        <dbReference type="ChEBI" id="CHEBI:18420"/>
    </ligand>
</feature>
<feature type="binding site" evidence="1">
    <location>
        <position position="390"/>
    </location>
    <ligand>
        <name>Mg(2+)</name>
        <dbReference type="ChEBI" id="CHEBI:18420"/>
    </ligand>
</feature>
<feature type="binding site" evidence="1">
    <location>
        <position position="394"/>
    </location>
    <ligand>
        <name>Mg(2+)</name>
        <dbReference type="ChEBI" id="CHEBI:18420"/>
    </ligand>
</feature>
<evidence type="ECO:0000250" key="1"/>
<evidence type="ECO:0000256" key="2">
    <source>
        <dbReference type="SAM" id="MobiDB-lite"/>
    </source>
</evidence>
<evidence type="ECO:0000269" key="3">
    <source>
    </source>
</evidence>
<evidence type="ECO:0000305" key="4"/>
<evidence type="ECO:0000305" key="5">
    <source>
    </source>
</evidence>
<keyword id="KW-0456">Lyase</keyword>
<keyword id="KW-0460">Magnesium</keyword>
<keyword id="KW-0479">Metal-binding</keyword>
<keyword id="KW-0614">Plasmid</keyword>
<comment type="function">
    <text evidence="3">Catalyzes the cyclization of 2-methylgeranyl diphosphate (2-MeGPP) to 2-methylisoborneol (2-MIB), which likely involves the intermediacy of 2-methyllinalyl diphosphate.</text>
</comment>
<comment type="catalytic activity">
    <reaction evidence="3">
        <text>(E)-2-methylgeranyl diphosphate + H2O = 2-methylisoborneol + diphosphate</text>
        <dbReference type="Rhea" id="RHEA:32571"/>
        <dbReference type="ChEBI" id="CHEBI:15377"/>
        <dbReference type="ChEBI" id="CHEBI:33019"/>
        <dbReference type="ChEBI" id="CHEBI:61984"/>
        <dbReference type="ChEBI" id="CHEBI:61987"/>
        <dbReference type="EC" id="4.2.3.118"/>
    </reaction>
</comment>
<comment type="cofactor">
    <cofactor evidence="5">
        <name>Mg(2+)</name>
        <dbReference type="ChEBI" id="CHEBI:18420"/>
    </cofactor>
</comment>
<comment type="miscellaneous">
    <text>2-MIB is a volatile organic compound that has an unusually low odor threshold. Together with geosmin, methylisoborneol is responsible for the characteristic smell of moist soil as well as unpleasant taste and odor episodes associated with public water supplies and contamination of various foodstuffs, including fish, wine, and beer.</text>
</comment>
<comment type="similarity">
    <text evidence="4">Belongs to the terpene synthase family. 2-methylisoborneol synthase subfamily.</text>
</comment>
<accession>D3KYU2</accession>
<gene>
    <name type="primary">tpc</name>
</gene>
<protein>
    <recommendedName>
        <fullName>2-methylisoborneol synthase</fullName>
        <shortName>2-MIB synthase</shortName>
        <ecNumber>4.2.3.118</ecNumber>
    </recommendedName>
</protein>